<organism>
    <name type="scientific">Methanothrix thermoacetophila (strain DSM 6194 / JCM 14653 / NBRC 101360 / PT)</name>
    <name type="common">Methanosaeta thermophila</name>
    <dbReference type="NCBI Taxonomy" id="349307"/>
    <lineage>
        <taxon>Archaea</taxon>
        <taxon>Methanobacteriati</taxon>
        <taxon>Methanobacteriota</taxon>
        <taxon>Stenosarchaea group</taxon>
        <taxon>Methanomicrobia</taxon>
        <taxon>Methanotrichales</taxon>
        <taxon>Methanotrichaceae</taxon>
        <taxon>Methanothrix</taxon>
    </lineage>
</organism>
<dbReference type="EMBL" id="CP000477">
    <property type="protein sequence ID" value="ABK14125.1"/>
    <property type="molecule type" value="Genomic_DNA"/>
</dbReference>
<dbReference type="RefSeq" id="WP_011695524.1">
    <property type="nucleotide sequence ID" value="NC_008553.1"/>
</dbReference>
<dbReference type="SMR" id="A0B601"/>
<dbReference type="STRING" id="349307.Mthe_0331"/>
<dbReference type="GeneID" id="4461960"/>
<dbReference type="KEGG" id="mtp:Mthe_0331"/>
<dbReference type="HOGENOM" id="CLU_084513_4_0_2"/>
<dbReference type="OrthoDB" id="25810at2157"/>
<dbReference type="Proteomes" id="UP000000674">
    <property type="component" value="Chromosome"/>
</dbReference>
<dbReference type="GO" id="GO:0005737">
    <property type="term" value="C:cytoplasm"/>
    <property type="evidence" value="ECO:0007669"/>
    <property type="project" value="UniProtKB-SubCell"/>
</dbReference>
<dbReference type="GO" id="GO:1990904">
    <property type="term" value="C:ribonucleoprotein complex"/>
    <property type="evidence" value="ECO:0007669"/>
    <property type="project" value="UniProtKB-KW"/>
</dbReference>
<dbReference type="GO" id="GO:0005840">
    <property type="term" value="C:ribosome"/>
    <property type="evidence" value="ECO:0007669"/>
    <property type="project" value="UniProtKB-KW"/>
</dbReference>
<dbReference type="GO" id="GO:0004526">
    <property type="term" value="F:ribonuclease P activity"/>
    <property type="evidence" value="ECO:0007669"/>
    <property type="project" value="UniProtKB-UniRule"/>
</dbReference>
<dbReference type="GO" id="GO:0019843">
    <property type="term" value="F:rRNA binding"/>
    <property type="evidence" value="ECO:0007669"/>
    <property type="project" value="UniProtKB-KW"/>
</dbReference>
<dbReference type="GO" id="GO:0003735">
    <property type="term" value="F:structural constituent of ribosome"/>
    <property type="evidence" value="ECO:0007669"/>
    <property type="project" value="InterPro"/>
</dbReference>
<dbReference type="GO" id="GO:0006412">
    <property type="term" value="P:translation"/>
    <property type="evidence" value="ECO:0007669"/>
    <property type="project" value="UniProtKB-UniRule"/>
</dbReference>
<dbReference type="GO" id="GO:0001682">
    <property type="term" value="P:tRNA 5'-leader removal"/>
    <property type="evidence" value="ECO:0007669"/>
    <property type="project" value="UniProtKB-UniRule"/>
</dbReference>
<dbReference type="FunFam" id="3.30.1330.30:FF:000020">
    <property type="entry name" value="50S ribosomal protein L7Ae"/>
    <property type="match status" value="1"/>
</dbReference>
<dbReference type="Gene3D" id="3.30.1330.30">
    <property type="match status" value="1"/>
</dbReference>
<dbReference type="HAMAP" id="MF_00326">
    <property type="entry name" value="Ribosomal_eL8"/>
    <property type="match status" value="1"/>
</dbReference>
<dbReference type="InterPro" id="IPR050257">
    <property type="entry name" value="eL8/uL1-like"/>
</dbReference>
<dbReference type="InterPro" id="IPR029064">
    <property type="entry name" value="Ribosomal_eL30-like_sf"/>
</dbReference>
<dbReference type="InterPro" id="IPR004038">
    <property type="entry name" value="Ribosomal_eL8/eL30/eS12/Gad45"/>
</dbReference>
<dbReference type="InterPro" id="IPR018492">
    <property type="entry name" value="Ribosomal_eL8/Nhp2"/>
</dbReference>
<dbReference type="InterPro" id="IPR022481">
    <property type="entry name" value="Ribosomal_eL8_arc"/>
</dbReference>
<dbReference type="NCBIfam" id="TIGR03677">
    <property type="entry name" value="eL8_ribo"/>
    <property type="match status" value="1"/>
</dbReference>
<dbReference type="PANTHER" id="PTHR23105">
    <property type="entry name" value="RIBOSOMAL PROTEIN L7AE FAMILY MEMBER"/>
    <property type="match status" value="1"/>
</dbReference>
<dbReference type="Pfam" id="PF01248">
    <property type="entry name" value="Ribosomal_L7Ae"/>
    <property type="match status" value="1"/>
</dbReference>
<dbReference type="PRINTS" id="PR00881">
    <property type="entry name" value="L7ARS6FAMILY"/>
</dbReference>
<dbReference type="PRINTS" id="PR00884">
    <property type="entry name" value="RIBOSOMALHS6"/>
</dbReference>
<dbReference type="SUPFAM" id="SSF55315">
    <property type="entry name" value="L30e-like"/>
    <property type="match status" value="1"/>
</dbReference>
<proteinExistence type="inferred from homology"/>
<reference key="1">
    <citation type="submission" date="2006-10" db="EMBL/GenBank/DDBJ databases">
        <title>Complete sequence of Methanosaeta thermophila PT.</title>
        <authorList>
            <consortium name="US DOE Joint Genome Institute"/>
            <person name="Copeland A."/>
            <person name="Lucas S."/>
            <person name="Lapidus A."/>
            <person name="Barry K."/>
            <person name="Detter J.C."/>
            <person name="Glavina del Rio T."/>
            <person name="Hammon N."/>
            <person name="Israni S."/>
            <person name="Pitluck S."/>
            <person name="Chain P."/>
            <person name="Malfatti S."/>
            <person name="Shin M."/>
            <person name="Vergez L."/>
            <person name="Schmutz J."/>
            <person name="Larimer F."/>
            <person name="Land M."/>
            <person name="Hauser L."/>
            <person name="Kyrpides N."/>
            <person name="Kim E."/>
            <person name="Smith K.S."/>
            <person name="Ingram-Smith C."/>
            <person name="Richardson P."/>
        </authorList>
    </citation>
    <scope>NUCLEOTIDE SEQUENCE [LARGE SCALE GENOMIC DNA]</scope>
    <source>
        <strain>DSM 6194 / JCM 14653 / NBRC 101360 / PT</strain>
    </source>
</reference>
<protein>
    <recommendedName>
        <fullName evidence="1">Large ribosomal subunit protein eL8</fullName>
    </recommendedName>
    <alternativeName>
        <fullName evidence="2">50S ribosomal protein L7Ae</fullName>
    </alternativeName>
    <alternativeName>
        <fullName evidence="1">Ribosomal protein L8e</fullName>
    </alternativeName>
</protein>
<gene>
    <name evidence="1" type="primary">rpl7ae</name>
    <name type="ordered locus">Mthe_0331</name>
</gene>
<name>RL7A_METTP</name>
<evidence type="ECO:0000255" key="1">
    <source>
        <dbReference type="HAMAP-Rule" id="MF_00326"/>
    </source>
</evidence>
<evidence type="ECO:0000305" key="2"/>
<comment type="function">
    <text evidence="1">Multifunctional RNA-binding protein that recognizes the K-turn motif in ribosomal RNA, the RNA component of RNase P, box H/ACA, box C/D and box C'/D' sRNAs.</text>
</comment>
<comment type="subunit">
    <text evidence="1">Part of the 50S ribosomal subunit. Probably part of the RNase P complex.</text>
</comment>
<comment type="subcellular location">
    <subcellularLocation>
        <location evidence="1">Cytoplasm</location>
    </subcellularLocation>
</comment>
<comment type="similarity">
    <text evidence="1">Belongs to the eukaryotic ribosomal protein eL8 family.</text>
</comment>
<accession>A0B601</accession>
<keyword id="KW-0963">Cytoplasm</keyword>
<keyword id="KW-1185">Reference proteome</keyword>
<keyword id="KW-0687">Ribonucleoprotein</keyword>
<keyword id="KW-0689">Ribosomal protein</keyword>
<keyword id="KW-0694">RNA-binding</keyword>
<keyword id="KW-0699">rRNA-binding</keyword>
<keyword id="KW-0819">tRNA processing</keyword>
<feature type="chain" id="PRO_1000005030" description="Large ribosomal subunit protein eL8">
    <location>
        <begin position="1"/>
        <end position="122"/>
    </location>
</feature>
<sequence>MARPIYVRFDVPPELASKSLEALELARDTGRIKKGTNEATKAVERGVAKLVIIGEDVEPPEIVAHLPPLCEEKNTPYVYVKKQSDVGAAAGLSVKSAAAAIIEPGKGKELLEEIIQKLQALK</sequence>